<comment type="function">
    <text evidence="9 11">Involved in the transduction of mitogenic signals from the cell membrane to the nucleus. May also regulate the TOR signaling cascade. Phosphorylates PFKFB2 (PubMed:36402789).</text>
</comment>
<comment type="function">
    <molecule>Isoform 2</molecule>
    <text evidence="9">Serves as a positive regulator of myogenic differentiation by inducing cell cycle arrest, the expression of myogenin and other muscle-specific proteins, and myotube formation.</text>
</comment>
<comment type="catalytic activity">
    <reaction>
        <text>L-seryl-[protein] + ATP = O-phospho-L-seryl-[protein] + ADP + H(+)</text>
        <dbReference type="Rhea" id="RHEA:17989"/>
        <dbReference type="Rhea" id="RHEA-COMP:9863"/>
        <dbReference type="Rhea" id="RHEA-COMP:11604"/>
        <dbReference type="ChEBI" id="CHEBI:15378"/>
        <dbReference type="ChEBI" id="CHEBI:29999"/>
        <dbReference type="ChEBI" id="CHEBI:30616"/>
        <dbReference type="ChEBI" id="CHEBI:83421"/>
        <dbReference type="ChEBI" id="CHEBI:456216"/>
        <dbReference type="EC" id="2.7.11.1"/>
    </reaction>
</comment>
<comment type="catalytic activity">
    <reaction>
        <text>L-threonyl-[protein] + ATP = O-phospho-L-threonyl-[protein] + ADP + H(+)</text>
        <dbReference type="Rhea" id="RHEA:46608"/>
        <dbReference type="Rhea" id="RHEA-COMP:11060"/>
        <dbReference type="Rhea" id="RHEA-COMP:11605"/>
        <dbReference type="ChEBI" id="CHEBI:15378"/>
        <dbReference type="ChEBI" id="CHEBI:30013"/>
        <dbReference type="ChEBI" id="CHEBI:30616"/>
        <dbReference type="ChEBI" id="CHEBI:61977"/>
        <dbReference type="ChEBI" id="CHEBI:456216"/>
        <dbReference type="EC" id="2.7.11.1"/>
    </reaction>
</comment>
<comment type="cofactor">
    <cofactor evidence="1">
        <name>Zn(2+)</name>
        <dbReference type="ChEBI" id="CHEBI:29105"/>
    </cofactor>
    <text evidence="1">Binds 2 Zn(2+) ions per subunit.</text>
</comment>
<comment type="subunit">
    <text evidence="7">Interacts with TH1L/NELFD.</text>
</comment>
<comment type="interaction">
    <interactant intactId="EBI-365961">
        <id>P10398</id>
    </interactant>
    <interactant intactId="EBI-536842">
        <id>P00966</id>
        <label>ASS1</label>
    </interactant>
    <organismsDiffer>false</organismsDiffer>
    <experiments>4</experiments>
</comment>
<comment type="interaction">
    <interactant intactId="EBI-365961">
        <id>P10398</id>
    </interactant>
    <interactant intactId="EBI-350590">
        <id>Q9UNS2</id>
        <label>COPS3</label>
    </interactant>
    <organismsDiffer>false</organismsDiffer>
    <experiments>3</experiments>
</comment>
<comment type="interaction">
    <interactant intactId="EBI-365961">
        <id>P10398</id>
    </interactant>
    <interactant intactId="EBI-536811">
        <id>P31327</id>
        <label>CPS1</label>
    </interactant>
    <organismsDiffer>false</organismsDiffer>
    <experiments>3</experiments>
</comment>
<comment type="interaction">
    <interactant intactId="EBI-365961">
        <id>P10398</id>
    </interactant>
    <interactant intactId="EBI-536772">
        <id>Q12805</id>
        <label>EFEMP1</label>
    </interactant>
    <organismsDiffer>false</organismsDiffer>
    <experiments>3</experiments>
</comment>
<comment type="interaction">
    <interactant intactId="EBI-365961">
        <id>P10398</id>
    </interactant>
    <interactant intactId="EBI-350145">
        <id>P01112</id>
        <label>HRAS</label>
    </interactant>
    <organismsDiffer>false</organismsDiffer>
    <experiments>7</experiments>
</comment>
<comment type="interaction">
    <interactant intactId="EBI-365961">
        <id>P10398</id>
    </interactant>
    <interactant intactId="EBI-352572">
        <id>P08238</id>
        <label>HSP90AB1</label>
    </interactant>
    <organismsDiffer>false</organismsDiffer>
    <experiments>9</experiments>
</comment>
<comment type="interaction">
    <interactant intactId="EBI-365961">
        <id>P10398</id>
    </interactant>
    <interactant intactId="EBI-447733">
        <id>O43187</id>
        <label>IRAK2</label>
    </interactant>
    <organismsDiffer>false</organismsDiffer>
    <experiments>2</experiments>
</comment>
<comment type="interaction">
    <interactant intactId="EBI-365961">
        <id>P10398</id>
    </interactant>
    <interactant intactId="EBI-968267">
        <id>Q92985</id>
        <label>IRF7</label>
    </interactant>
    <organismsDiffer>false</organismsDiffer>
    <experiments>2</experiments>
</comment>
<comment type="interaction">
    <interactant intactId="EBI-365961">
        <id>P10398</id>
    </interactant>
    <interactant intactId="EBI-1056930">
        <id>P36507</id>
        <label>MAP2K2</label>
    </interactant>
    <organismsDiffer>false</organismsDiffer>
    <experiments>10</experiments>
</comment>
<comment type="interaction">
    <interactant intactId="EBI-365961">
        <id>P10398</id>
    </interactant>
    <interactant intactId="EBI-536725">
        <id>Q8IXH7</id>
        <label>NELFCD</label>
    </interactant>
    <organismsDiffer>false</organismsDiffer>
    <experiments>5</experiments>
</comment>
<comment type="interaction">
    <interactant intactId="EBI-365961">
        <id>P10398</id>
    </interactant>
    <interactant intactId="EBI-536866">
        <id>O95848</id>
        <label>NUDT14</label>
    </interactant>
    <organismsDiffer>false</organismsDiffer>
    <experiments>3</experiments>
</comment>
<comment type="interaction">
    <interactant intactId="EBI-365961">
        <id>P10398</id>
    </interactant>
    <interactant intactId="EBI-536853">
        <id>Q96KB5</id>
        <label>PBK</label>
    </interactant>
    <organismsDiffer>false</organismsDiffer>
    <experiments>3</experiments>
</comment>
<comment type="interaction">
    <interactant intactId="EBI-365961">
        <id>P10398</id>
    </interactant>
    <interactant intactId="EBI-536755">
        <id>O94906</id>
        <label>PRPF6</label>
    </interactant>
    <organismsDiffer>false</organismsDiffer>
    <experiments>4</experiments>
</comment>
<comment type="interaction">
    <interactant intactId="EBI-365961">
        <id>P10398</id>
    </interactant>
    <interactant intactId="EBI-536715">
        <id>P53611</id>
        <label>RABGGTB</label>
    </interactant>
    <organismsDiffer>false</organismsDiffer>
    <experiments>3</experiments>
</comment>
<comment type="interaction">
    <interactant intactId="EBI-365961">
        <id>P10398</id>
    </interactant>
    <interactant intactId="EBI-491037">
        <id>P62070</id>
        <label>RRAS2</label>
    </interactant>
    <organismsDiffer>false</organismsDiffer>
    <experiments>3</experiments>
</comment>
<comment type="interaction">
    <interactant intactId="EBI-365961">
        <id>P10398</id>
    </interactant>
    <interactant intactId="EBI-476295">
        <id>P31947</id>
        <label>SFN</label>
    </interactant>
    <organismsDiffer>false</organismsDiffer>
    <experiments>4</experiments>
</comment>
<comment type="interaction">
    <interactant intactId="EBI-365961">
        <id>P10398</id>
    </interactant>
    <interactant intactId="EBI-861737">
        <id>O43615</id>
        <label>TIMM44</label>
    </interactant>
    <organismsDiffer>false</organismsDiffer>
    <experiments>3</experiments>
</comment>
<comment type="interaction">
    <interactant intactId="EBI-365961">
        <id>P10398</id>
    </interactant>
    <interactant intactId="EBI-355175">
        <id>Q3ZCQ8</id>
        <label>TIMM50</label>
    </interactant>
    <organismsDiffer>false</organismsDiffer>
    <experiments>4</experiments>
</comment>
<comment type="interaction">
    <interactant intactId="EBI-365961">
        <id>P10398</id>
    </interactant>
    <interactant intactId="EBI-528644">
        <id>P58753</id>
        <label>TIRAP</label>
    </interactant>
    <organismsDiffer>false</organismsDiffer>
    <experiments>2</experiments>
</comment>
<comment type="interaction">
    <interactant intactId="EBI-365961">
        <id>P10398</id>
    </interactant>
    <interactant intactId="EBI-356498">
        <id>P62258</id>
        <label>YWHAE</label>
    </interactant>
    <organismsDiffer>false</organismsDiffer>
    <experiments>8</experiments>
</comment>
<comment type="interaction">
    <interactant intactId="EBI-365961">
        <id>P10398</id>
    </interactant>
    <interactant intactId="EBI-347088">
        <id>P63104</id>
        <label>YWHAZ</label>
    </interactant>
    <organismsDiffer>false</organismsDiffer>
    <experiments>10</experiments>
</comment>
<comment type="alternative products">
    <event type="alternative splicing"/>
    <isoform>
        <id>P10398-1</id>
        <name>1</name>
        <sequence type="displayed"/>
    </isoform>
    <isoform>
        <id>P10398-2</id>
        <name>2</name>
        <name>DA-Raf1</name>
        <sequence type="described" ref="VSP_045609 VSP_045610"/>
    </isoform>
</comment>
<comment type="tissue specificity">
    <text>Predominantly in urogenital tissues.</text>
</comment>
<comment type="PTM">
    <text evidence="10">Dephosphorylation of Ser-214 by the SHOC2-MRAS-PP1c (SMP) complex consisting of SHOC2, GTP-bound M-Ras/MRAS and the catalytic subunit of protein phosphatase 1 (PPP1CA, PPP1CB or PPP1CC); this relieves inactivation and stimulates kinase activity.</text>
</comment>
<comment type="miscellaneous">
    <molecule>Isoform 2</molecule>
    <text evidence="14">Has a wider tissue distribution than isoform 1, and acts as a dominant-negative antagonist.</text>
</comment>
<comment type="similarity">
    <text evidence="14">Belongs to the protein kinase superfamily. TKL Ser/Thr protein kinase family. RAF subfamily.</text>
</comment>
<reference key="1">
    <citation type="journal article" date="1987" name="Nucleic Acids Res.">
        <title>The complete coding sequence of the human A-raf-1 oncogene and transforming activity of a human A-raf carrying retrovirus.</title>
        <authorList>
            <person name="Beck T.W."/>
            <person name="Huleihel M."/>
            <person name="Gunnell M."/>
            <person name="Bonner T.I."/>
            <person name="Rapp U.R."/>
        </authorList>
    </citation>
    <scope>NUCLEOTIDE SEQUENCE [MRNA] (ISOFORM 1)</scope>
</reference>
<reference key="2">
    <citation type="journal article" date="1994" name="Genomics">
        <title>The complete sequence and promoter activity of the human A-raf-1 gene (ARAF1).</title>
        <authorList>
            <person name="Lee J.-E."/>
            <person name="Beck T.W."/>
            <person name="Brennscheidt U."/>
            <person name="DeGennaro L.J."/>
            <person name="Rapp U.R."/>
        </authorList>
    </citation>
    <scope>NUCLEOTIDE SEQUENCE [GENOMIC DNA]</scope>
    <source>
        <tissue>Placenta</tissue>
    </source>
</reference>
<reference key="3">
    <citation type="journal article" date="2007" name="J. Cell Biol.">
        <title>DA-Raf1, a competent intrinsic dominant-negative antagonist of the Ras-ERK pathway, is required for myogenic differentiation.</title>
        <authorList>
            <person name="Yokoyama T."/>
            <person name="Takano K."/>
            <person name="Yoshida A."/>
            <person name="Katada F."/>
            <person name="Sun P."/>
            <person name="Takenawa T."/>
            <person name="Andoh T."/>
            <person name="Endo T."/>
        </authorList>
    </citation>
    <scope>NUCLEOTIDE SEQUENCE [MRNA] (ISOFORM 2)</scope>
    <scope>FUNCTION (ISOFORM 2)</scope>
    <scope>ALTERNATIVE SPLICING</scope>
</reference>
<reference key="4">
    <citation type="submission" date="2003-05" db="EMBL/GenBank/DDBJ databases">
        <title>Cloning of human full-length CDSs in BD Creator(TM) system donor vector.</title>
        <authorList>
            <person name="Kalnine N."/>
            <person name="Chen X."/>
            <person name="Rolfs A."/>
            <person name="Halleck A."/>
            <person name="Hines L."/>
            <person name="Eisenstein S."/>
            <person name="Koundinya M."/>
            <person name="Raphael J."/>
            <person name="Moreira D."/>
            <person name="Kelley T."/>
            <person name="LaBaer J."/>
            <person name="Lin Y."/>
            <person name="Phelan M."/>
            <person name="Farmer A."/>
        </authorList>
    </citation>
    <scope>NUCLEOTIDE SEQUENCE [LARGE SCALE MRNA] (ISOFORM 1)</scope>
</reference>
<reference key="5">
    <citation type="submission" date="2003-04" db="EMBL/GenBank/DDBJ databases">
        <title>Full-length cDNA libraries and normalization.</title>
        <authorList>
            <person name="Li W.B."/>
            <person name="Gruber C."/>
            <person name="Jessee J."/>
            <person name="Polayes D."/>
        </authorList>
    </citation>
    <scope>NUCLEOTIDE SEQUENCE [LARGE SCALE MRNA] (ISOFORM 2)</scope>
    <source>
        <tissue>Placenta</tissue>
    </source>
</reference>
<reference key="6">
    <citation type="journal article" date="2005" name="Nature">
        <title>The DNA sequence of the human X chromosome.</title>
        <authorList>
            <person name="Ross M.T."/>
            <person name="Grafham D.V."/>
            <person name="Coffey A.J."/>
            <person name="Scherer S."/>
            <person name="McLay K."/>
            <person name="Muzny D."/>
            <person name="Platzer M."/>
            <person name="Howell G.R."/>
            <person name="Burrows C."/>
            <person name="Bird C.P."/>
            <person name="Frankish A."/>
            <person name="Lovell F.L."/>
            <person name="Howe K.L."/>
            <person name="Ashurst J.L."/>
            <person name="Fulton R.S."/>
            <person name="Sudbrak R."/>
            <person name="Wen G."/>
            <person name="Jones M.C."/>
            <person name="Hurles M.E."/>
            <person name="Andrews T.D."/>
            <person name="Scott C.E."/>
            <person name="Searle S."/>
            <person name="Ramser J."/>
            <person name="Whittaker A."/>
            <person name="Deadman R."/>
            <person name="Carter N.P."/>
            <person name="Hunt S.E."/>
            <person name="Chen R."/>
            <person name="Cree A."/>
            <person name="Gunaratne P."/>
            <person name="Havlak P."/>
            <person name="Hodgson A."/>
            <person name="Metzker M.L."/>
            <person name="Richards S."/>
            <person name="Scott G."/>
            <person name="Steffen D."/>
            <person name="Sodergren E."/>
            <person name="Wheeler D.A."/>
            <person name="Worley K.C."/>
            <person name="Ainscough R."/>
            <person name="Ambrose K.D."/>
            <person name="Ansari-Lari M.A."/>
            <person name="Aradhya S."/>
            <person name="Ashwell R.I."/>
            <person name="Babbage A.K."/>
            <person name="Bagguley C.L."/>
            <person name="Ballabio A."/>
            <person name="Banerjee R."/>
            <person name="Barker G.E."/>
            <person name="Barlow K.F."/>
            <person name="Barrett I.P."/>
            <person name="Bates K.N."/>
            <person name="Beare D.M."/>
            <person name="Beasley H."/>
            <person name="Beasley O."/>
            <person name="Beck A."/>
            <person name="Bethel G."/>
            <person name="Blechschmidt K."/>
            <person name="Brady N."/>
            <person name="Bray-Allen S."/>
            <person name="Bridgeman A.M."/>
            <person name="Brown A.J."/>
            <person name="Brown M.J."/>
            <person name="Bonnin D."/>
            <person name="Bruford E.A."/>
            <person name="Buhay C."/>
            <person name="Burch P."/>
            <person name="Burford D."/>
            <person name="Burgess J."/>
            <person name="Burrill W."/>
            <person name="Burton J."/>
            <person name="Bye J.M."/>
            <person name="Carder C."/>
            <person name="Carrel L."/>
            <person name="Chako J."/>
            <person name="Chapman J.C."/>
            <person name="Chavez D."/>
            <person name="Chen E."/>
            <person name="Chen G."/>
            <person name="Chen Y."/>
            <person name="Chen Z."/>
            <person name="Chinault C."/>
            <person name="Ciccodicola A."/>
            <person name="Clark S.Y."/>
            <person name="Clarke G."/>
            <person name="Clee C.M."/>
            <person name="Clegg S."/>
            <person name="Clerc-Blankenburg K."/>
            <person name="Clifford K."/>
            <person name="Cobley V."/>
            <person name="Cole C.G."/>
            <person name="Conquer J.S."/>
            <person name="Corby N."/>
            <person name="Connor R.E."/>
            <person name="David R."/>
            <person name="Davies J."/>
            <person name="Davis C."/>
            <person name="Davis J."/>
            <person name="Delgado O."/>
            <person name="Deshazo D."/>
            <person name="Dhami P."/>
            <person name="Ding Y."/>
            <person name="Dinh H."/>
            <person name="Dodsworth S."/>
            <person name="Draper H."/>
            <person name="Dugan-Rocha S."/>
            <person name="Dunham A."/>
            <person name="Dunn M."/>
            <person name="Durbin K.J."/>
            <person name="Dutta I."/>
            <person name="Eades T."/>
            <person name="Ellwood M."/>
            <person name="Emery-Cohen A."/>
            <person name="Errington H."/>
            <person name="Evans K.L."/>
            <person name="Faulkner L."/>
            <person name="Francis F."/>
            <person name="Frankland J."/>
            <person name="Fraser A.E."/>
            <person name="Galgoczy P."/>
            <person name="Gilbert J."/>
            <person name="Gill R."/>
            <person name="Gloeckner G."/>
            <person name="Gregory S.G."/>
            <person name="Gribble S."/>
            <person name="Griffiths C."/>
            <person name="Grocock R."/>
            <person name="Gu Y."/>
            <person name="Gwilliam R."/>
            <person name="Hamilton C."/>
            <person name="Hart E.A."/>
            <person name="Hawes A."/>
            <person name="Heath P.D."/>
            <person name="Heitmann K."/>
            <person name="Hennig S."/>
            <person name="Hernandez J."/>
            <person name="Hinzmann B."/>
            <person name="Ho S."/>
            <person name="Hoffs M."/>
            <person name="Howden P.J."/>
            <person name="Huckle E.J."/>
            <person name="Hume J."/>
            <person name="Hunt P.J."/>
            <person name="Hunt A.R."/>
            <person name="Isherwood J."/>
            <person name="Jacob L."/>
            <person name="Johnson D."/>
            <person name="Jones S."/>
            <person name="de Jong P.J."/>
            <person name="Joseph S.S."/>
            <person name="Keenan S."/>
            <person name="Kelly S."/>
            <person name="Kershaw J.K."/>
            <person name="Khan Z."/>
            <person name="Kioschis P."/>
            <person name="Klages S."/>
            <person name="Knights A.J."/>
            <person name="Kosiura A."/>
            <person name="Kovar-Smith C."/>
            <person name="Laird G.K."/>
            <person name="Langford C."/>
            <person name="Lawlor S."/>
            <person name="Leversha M."/>
            <person name="Lewis L."/>
            <person name="Liu W."/>
            <person name="Lloyd C."/>
            <person name="Lloyd D.M."/>
            <person name="Loulseged H."/>
            <person name="Loveland J.E."/>
            <person name="Lovell J.D."/>
            <person name="Lozado R."/>
            <person name="Lu J."/>
            <person name="Lyne R."/>
            <person name="Ma J."/>
            <person name="Maheshwari M."/>
            <person name="Matthews L.H."/>
            <person name="McDowall J."/>
            <person name="McLaren S."/>
            <person name="McMurray A."/>
            <person name="Meidl P."/>
            <person name="Meitinger T."/>
            <person name="Milne S."/>
            <person name="Miner G."/>
            <person name="Mistry S.L."/>
            <person name="Morgan M."/>
            <person name="Morris S."/>
            <person name="Mueller I."/>
            <person name="Mullikin J.C."/>
            <person name="Nguyen N."/>
            <person name="Nordsiek G."/>
            <person name="Nyakatura G."/>
            <person name="O'dell C.N."/>
            <person name="Okwuonu G."/>
            <person name="Palmer S."/>
            <person name="Pandian R."/>
            <person name="Parker D."/>
            <person name="Parrish J."/>
            <person name="Pasternak S."/>
            <person name="Patel D."/>
            <person name="Pearce A.V."/>
            <person name="Pearson D.M."/>
            <person name="Pelan S.E."/>
            <person name="Perez L."/>
            <person name="Porter K.M."/>
            <person name="Ramsey Y."/>
            <person name="Reichwald K."/>
            <person name="Rhodes S."/>
            <person name="Ridler K.A."/>
            <person name="Schlessinger D."/>
            <person name="Schueler M.G."/>
            <person name="Sehra H.K."/>
            <person name="Shaw-Smith C."/>
            <person name="Shen H."/>
            <person name="Sheridan E.M."/>
            <person name="Shownkeen R."/>
            <person name="Skuce C.D."/>
            <person name="Smith M.L."/>
            <person name="Sotheran E.C."/>
            <person name="Steingruber H.E."/>
            <person name="Steward C.A."/>
            <person name="Storey R."/>
            <person name="Swann R.M."/>
            <person name="Swarbreck D."/>
            <person name="Tabor P.E."/>
            <person name="Taudien S."/>
            <person name="Taylor T."/>
            <person name="Teague B."/>
            <person name="Thomas K."/>
            <person name="Thorpe A."/>
            <person name="Timms K."/>
            <person name="Tracey A."/>
            <person name="Trevanion S."/>
            <person name="Tromans A.C."/>
            <person name="d'Urso M."/>
            <person name="Verduzco D."/>
            <person name="Villasana D."/>
            <person name="Waldron L."/>
            <person name="Wall M."/>
            <person name="Wang Q."/>
            <person name="Warren J."/>
            <person name="Warry G.L."/>
            <person name="Wei X."/>
            <person name="West A."/>
            <person name="Whitehead S.L."/>
            <person name="Whiteley M.N."/>
            <person name="Wilkinson J.E."/>
            <person name="Willey D.L."/>
            <person name="Williams G."/>
            <person name="Williams L."/>
            <person name="Williamson A."/>
            <person name="Williamson H."/>
            <person name="Wilming L."/>
            <person name="Woodmansey R.L."/>
            <person name="Wray P.W."/>
            <person name="Yen J."/>
            <person name="Zhang J."/>
            <person name="Zhou J."/>
            <person name="Zoghbi H."/>
            <person name="Zorilla S."/>
            <person name="Buck D."/>
            <person name="Reinhardt R."/>
            <person name="Poustka A."/>
            <person name="Rosenthal A."/>
            <person name="Lehrach H."/>
            <person name="Meindl A."/>
            <person name="Minx P.J."/>
            <person name="Hillier L.W."/>
            <person name="Willard H.F."/>
            <person name="Wilson R.K."/>
            <person name="Waterston R.H."/>
            <person name="Rice C.M."/>
            <person name="Vaudin M."/>
            <person name="Coulson A."/>
            <person name="Nelson D.L."/>
            <person name="Weinstock G."/>
            <person name="Sulston J.E."/>
            <person name="Durbin R.M."/>
            <person name="Hubbard T."/>
            <person name="Gibbs R.A."/>
            <person name="Beck S."/>
            <person name="Rogers J."/>
            <person name="Bentley D.R."/>
        </authorList>
    </citation>
    <scope>NUCLEOTIDE SEQUENCE [LARGE SCALE GENOMIC DNA]</scope>
</reference>
<reference key="7">
    <citation type="journal article" date="2004" name="Genome Res.">
        <title>The status, quality, and expansion of the NIH full-length cDNA project: the Mammalian Gene Collection (MGC).</title>
        <authorList>
            <consortium name="The MGC Project Team"/>
        </authorList>
    </citation>
    <scope>NUCLEOTIDE SEQUENCE [LARGE SCALE MRNA] (ISOFORM 1)</scope>
    <source>
        <tissue>Kidney</tissue>
    </source>
</reference>
<reference key="8">
    <citation type="journal article" date="1986" name="Proc. Natl. Acad. Sci. U.S.A.">
        <title>Pks, a raf-related sequence in humans.</title>
        <authorList>
            <person name="Mark G.E."/>
            <person name="Seeley T.W."/>
            <person name="Shows T.B."/>
            <person name="Mountz J.D."/>
        </authorList>
    </citation>
    <scope>NUCLEOTIDE SEQUENCE [MRNA] OF 292-589 (ISOFORM 1)</scope>
</reference>
<reference key="9">
    <citation type="journal article" date="2002" name="Mol. Cell. Biochem.">
        <title>Identification of TH1 as an interaction partner of A-Raf kinase.</title>
        <authorList>
            <person name="Yin X.L."/>
            <person name="Chen S."/>
            <person name="Gu J.X."/>
        </authorList>
    </citation>
    <scope>INTERACTION WITH NELFD</scope>
</reference>
<reference key="10">
    <citation type="journal article" date="2006" name="Cell">
        <title>Global, in vivo, and site-specific phosphorylation dynamics in signaling networks.</title>
        <authorList>
            <person name="Olsen J.V."/>
            <person name="Blagoev B."/>
            <person name="Gnad F."/>
            <person name="Macek B."/>
            <person name="Kumar C."/>
            <person name="Mortensen P."/>
            <person name="Mann M."/>
        </authorList>
    </citation>
    <scope>IDENTIFICATION BY MASS SPECTROMETRY [LARGE SCALE ANALYSIS]</scope>
    <source>
        <tissue>Cervix carcinoma</tissue>
    </source>
</reference>
<reference key="11">
    <citation type="journal article" date="2006" name="Nat. Biotechnol.">
        <title>A probability-based approach for high-throughput protein phosphorylation analysis and site localization.</title>
        <authorList>
            <person name="Beausoleil S.A."/>
            <person name="Villen J."/>
            <person name="Gerber S.A."/>
            <person name="Rush J."/>
            <person name="Gygi S.P."/>
        </authorList>
    </citation>
    <scope>PHOSPHORYLATION [LARGE SCALE ANALYSIS] AT SER-257</scope>
    <scope>IDENTIFICATION BY MASS SPECTROMETRY [LARGE SCALE ANALYSIS]</scope>
    <source>
        <tissue>Cervix carcinoma</tissue>
    </source>
</reference>
<reference key="12">
    <citation type="journal article" date="2008" name="J. Proteome Res.">
        <title>Combining protein-based IMAC, peptide-based IMAC, and MudPIT for efficient phosphoproteomic analysis.</title>
        <authorList>
            <person name="Cantin G.T."/>
            <person name="Yi W."/>
            <person name="Lu B."/>
            <person name="Park S.K."/>
            <person name="Xu T."/>
            <person name="Lee J.-D."/>
            <person name="Yates J.R. III"/>
        </authorList>
    </citation>
    <scope>IDENTIFICATION BY MASS SPECTROMETRY [LARGE SCALE ANALYSIS]</scope>
    <source>
        <tissue>Cervix carcinoma</tissue>
    </source>
</reference>
<reference key="13">
    <citation type="journal article" date="2008" name="Mol. Cell">
        <title>Kinase-selective enrichment enables quantitative phosphoproteomics of the kinome across the cell cycle.</title>
        <authorList>
            <person name="Daub H."/>
            <person name="Olsen J.V."/>
            <person name="Bairlein M."/>
            <person name="Gnad F."/>
            <person name="Oppermann F.S."/>
            <person name="Korner R."/>
            <person name="Greff Z."/>
            <person name="Keri G."/>
            <person name="Stemmann O."/>
            <person name="Mann M."/>
        </authorList>
    </citation>
    <scope>PHOSPHORYLATION [LARGE SCALE ANALYSIS] AT SER-186</scope>
    <scope>IDENTIFICATION BY MASS SPECTROMETRY [LARGE SCALE ANALYSIS]</scope>
    <source>
        <tissue>Cervix carcinoma</tissue>
    </source>
</reference>
<reference key="14">
    <citation type="journal article" date="2008" name="Proc. Natl. Acad. Sci. U.S.A.">
        <title>A quantitative atlas of mitotic phosphorylation.</title>
        <authorList>
            <person name="Dephoure N."/>
            <person name="Zhou C."/>
            <person name="Villen J."/>
            <person name="Beausoleil S.A."/>
            <person name="Bakalarski C.E."/>
            <person name="Elledge S.J."/>
            <person name="Gygi S.P."/>
        </authorList>
    </citation>
    <scope>IDENTIFICATION BY MASS SPECTROMETRY [LARGE SCALE ANALYSIS]</scope>
    <source>
        <tissue>Cervix carcinoma</tissue>
    </source>
</reference>
<reference key="15">
    <citation type="journal article" date="2009" name="Sci. Signal.">
        <title>Quantitative phosphoproteomic analysis of T cell receptor signaling reveals system-wide modulation of protein-protein interactions.</title>
        <authorList>
            <person name="Mayya V."/>
            <person name="Lundgren D.H."/>
            <person name="Hwang S.-I."/>
            <person name="Rezaul K."/>
            <person name="Wu L."/>
            <person name="Eng J.K."/>
            <person name="Rodionov V."/>
            <person name="Han D.K."/>
        </authorList>
    </citation>
    <scope>PHOSPHORYLATION [LARGE SCALE ANALYSIS] AT THR-318</scope>
    <scope>IDENTIFICATION BY MASS SPECTROMETRY [LARGE SCALE ANALYSIS]</scope>
    <source>
        <tissue>Leukemic T-cell</tissue>
    </source>
</reference>
<reference key="16">
    <citation type="journal article" date="2010" name="Sci. Signal.">
        <title>Quantitative phosphoproteomics reveals widespread full phosphorylation site occupancy during mitosis.</title>
        <authorList>
            <person name="Olsen J.V."/>
            <person name="Vermeulen M."/>
            <person name="Santamaria A."/>
            <person name="Kumar C."/>
            <person name="Miller M.L."/>
            <person name="Jensen L.J."/>
            <person name="Gnad F."/>
            <person name="Cox J."/>
            <person name="Jensen T.S."/>
            <person name="Nigg E.A."/>
            <person name="Brunak S."/>
            <person name="Mann M."/>
        </authorList>
    </citation>
    <scope>IDENTIFICATION BY MASS SPECTROMETRY [LARGE SCALE ANALYSIS]</scope>
    <source>
        <tissue>Cervix carcinoma</tissue>
    </source>
</reference>
<reference key="17">
    <citation type="journal article" date="2011" name="BMC Syst. Biol.">
        <title>Initial characterization of the human central proteome.</title>
        <authorList>
            <person name="Burkard T.R."/>
            <person name="Planyavsky M."/>
            <person name="Kaupe I."/>
            <person name="Breitwieser F.P."/>
            <person name="Buerckstuemmer T."/>
            <person name="Bennett K.L."/>
            <person name="Superti-Furga G."/>
            <person name="Colinge J."/>
        </authorList>
    </citation>
    <scope>IDENTIFICATION BY MASS SPECTROMETRY [LARGE SCALE ANALYSIS]</scope>
</reference>
<reference key="18">
    <citation type="journal article" date="2011" name="Sci. Signal.">
        <title>System-wide temporal characterization of the proteome and phosphoproteome of human embryonic stem cell differentiation.</title>
        <authorList>
            <person name="Rigbolt K.T."/>
            <person name="Prokhorova T.A."/>
            <person name="Akimov V."/>
            <person name="Henningsen J."/>
            <person name="Johansen P.T."/>
            <person name="Kratchmarova I."/>
            <person name="Kassem M."/>
            <person name="Mann M."/>
            <person name="Olsen J.V."/>
            <person name="Blagoev B."/>
        </authorList>
    </citation>
    <scope>IDENTIFICATION BY MASS SPECTROMETRY [LARGE SCALE ANALYSIS]</scope>
</reference>
<reference key="19">
    <citation type="journal article" date="2012" name="Nat. Cell Biol.">
        <title>PRR5L degradation promotes mTORC2-mediated PKC-delta phosphorylation and cell migration downstream of Galpha12.</title>
        <authorList>
            <person name="Gan X."/>
            <person name="Wang J."/>
            <person name="Wang C."/>
            <person name="Sommer E."/>
            <person name="Kozasa T."/>
            <person name="Srinivasula S."/>
            <person name="Alessi D."/>
            <person name="Offermanns S."/>
            <person name="Simon M.I."/>
            <person name="Wu D."/>
        </authorList>
    </citation>
    <scope>FUNCTION IN TOR SIGNALING</scope>
</reference>
<reference key="20">
    <citation type="journal article" date="2013" name="J. Proteome Res.">
        <title>Toward a comprehensive characterization of a human cancer cell phosphoproteome.</title>
        <authorList>
            <person name="Zhou H."/>
            <person name="Di Palma S."/>
            <person name="Preisinger C."/>
            <person name="Peng M."/>
            <person name="Polat A.N."/>
            <person name="Heck A.J."/>
            <person name="Mohammed S."/>
        </authorList>
    </citation>
    <scope>PHOSPHORYLATION [LARGE SCALE ANALYSIS] AT SER-157; SER-162; THR-253; SER-257 AND SER-269</scope>
    <scope>IDENTIFICATION BY MASS SPECTROMETRY [LARGE SCALE ANALYSIS]</scope>
    <source>
        <tissue>Cervix carcinoma</tissue>
        <tissue>Erythroleukemia</tissue>
    </source>
</reference>
<reference key="21">
    <citation type="journal article" date="2014" name="J. Proteomics">
        <title>An enzyme assisted RP-RPLC approach for in-depth analysis of human liver phosphoproteome.</title>
        <authorList>
            <person name="Bian Y."/>
            <person name="Song C."/>
            <person name="Cheng K."/>
            <person name="Dong M."/>
            <person name="Wang F."/>
            <person name="Huang J."/>
            <person name="Sun D."/>
            <person name="Wang L."/>
            <person name="Ye M."/>
            <person name="Zou H."/>
        </authorList>
    </citation>
    <scope>PHOSPHORYLATION [LARGE SCALE ANALYSIS] AT THR-181; SER-186 AND SER-257</scope>
    <scope>IDENTIFICATION BY MASS SPECTROMETRY [LARGE SCALE ANALYSIS]</scope>
    <source>
        <tissue>Liver</tissue>
    </source>
</reference>
<reference key="22">
    <citation type="journal article" date="2022" name="Nat. Commun.">
        <title>BRAF activation by metabolic stress promotes glycolysis sensitizing NRASQ61-mutated melanomas to targeted therapy.</title>
        <authorList>
            <person name="McGrail K."/>
            <person name="Granado-Martinez P."/>
            <person name="Esteve-Puig R."/>
            <person name="Garcia-Ortega S."/>
            <person name="Ding Y."/>
            <person name="Sanchez-Redondo S."/>
            <person name="Ferrer B."/>
            <person name="Hernandez-Losa J."/>
            <person name="Canals F."/>
            <person name="Manzano A."/>
            <person name="Navarro-Sabate A."/>
            <person name="Bartrons R."/>
            <person name="Yanes O."/>
            <person name="Perez-Alea M."/>
            <person name="Munoz-Couselo E."/>
            <person name="Garcia-Patos V."/>
            <person name="Recio J.A."/>
        </authorList>
    </citation>
    <scope>FUNCTION</scope>
</reference>
<reference key="23">
    <citation type="journal article" date="2022" name="Nature">
        <title>Structural basis for SHOC2 modulation of RAS signalling.</title>
        <authorList>
            <person name="Liau N.P.D."/>
            <person name="Johnson M.C."/>
            <person name="Izadi S."/>
            <person name="Gerosa L."/>
            <person name="Hammel M."/>
            <person name="Bruning J.M."/>
            <person name="Wendorff T.J."/>
            <person name="Phung W."/>
            <person name="Hymowitz S.G."/>
            <person name="Sudhamsu J."/>
        </authorList>
    </citation>
    <scope>PHOSPHORYLATION AT SER-214</scope>
    <scope>DEPHOSPHORYLATION AT SER-214 BY SMP COMPLEX</scope>
</reference>
<reference key="24">
    <citation type="submission" date="2005-07" db="PDB data bank">
        <title>Solution structure of the N-terminal RAS-binding domain (RBD) in human A-RAF kinase.</title>
        <authorList>
            <consortium name="RIKEN structural genomics initiative (RSGI)"/>
        </authorList>
    </citation>
    <scope>STRUCTURE BY NMR OF 19-91</scope>
</reference>
<reference key="25">
    <citation type="journal article" date="2007" name="Nature">
        <title>Patterns of somatic mutation in human cancer genomes.</title>
        <authorList>
            <person name="Greenman C."/>
            <person name="Stephens P."/>
            <person name="Smith R."/>
            <person name="Dalgliesh G.L."/>
            <person name="Hunter C."/>
            <person name="Bignell G."/>
            <person name="Davies H."/>
            <person name="Teague J."/>
            <person name="Butler A."/>
            <person name="Stevens C."/>
            <person name="Edkins S."/>
            <person name="O'Meara S."/>
            <person name="Vastrik I."/>
            <person name="Schmidt E.E."/>
            <person name="Avis T."/>
            <person name="Barthorpe S."/>
            <person name="Bhamra G."/>
            <person name="Buck G."/>
            <person name="Choudhury B."/>
            <person name="Clements J."/>
            <person name="Cole J."/>
            <person name="Dicks E."/>
            <person name="Forbes S."/>
            <person name="Gray K."/>
            <person name="Halliday K."/>
            <person name="Harrison R."/>
            <person name="Hills K."/>
            <person name="Hinton J."/>
            <person name="Jenkinson A."/>
            <person name="Jones D."/>
            <person name="Menzies A."/>
            <person name="Mironenko T."/>
            <person name="Perry J."/>
            <person name="Raine K."/>
            <person name="Richardson D."/>
            <person name="Shepherd R."/>
            <person name="Small A."/>
            <person name="Tofts C."/>
            <person name="Varian J."/>
            <person name="Webb T."/>
            <person name="West S."/>
            <person name="Widaa S."/>
            <person name="Yates A."/>
            <person name="Cahill D.P."/>
            <person name="Louis D.N."/>
            <person name="Goldstraw P."/>
            <person name="Nicholson A.G."/>
            <person name="Brasseur F."/>
            <person name="Looijenga L."/>
            <person name="Weber B.L."/>
            <person name="Chiew Y.-E."/>
            <person name="DeFazio A."/>
            <person name="Greaves M.F."/>
            <person name="Green A.R."/>
            <person name="Campbell P."/>
            <person name="Birney E."/>
            <person name="Easton D.F."/>
            <person name="Chenevix-Trench G."/>
            <person name="Tan M.-H."/>
            <person name="Khoo S.K."/>
            <person name="Teh B.T."/>
            <person name="Yuen S.T."/>
            <person name="Leung S.Y."/>
            <person name="Wooster R."/>
            <person name="Futreal P.A."/>
            <person name="Stratton M.R."/>
        </authorList>
    </citation>
    <scope>VARIANTS [LARGE SCALE ANALYSIS] THR-98; CYS-331 AND ASP-578</scope>
</reference>
<gene>
    <name type="primary">ARAF</name>
    <name type="synonym">ARAF1</name>
    <name type="synonym">PKS</name>
    <name type="synonym">PKS2</name>
</gene>
<proteinExistence type="evidence at protein level"/>
<dbReference type="EC" id="2.7.11.1"/>
<dbReference type="EMBL" id="X04790">
    <property type="protein sequence ID" value="CAA28476.1"/>
    <property type="molecule type" value="mRNA"/>
</dbReference>
<dbReference type="EMBL" id="L24038">
    <property type="protein sequence ID" value="AAA65219.1"/>
    <property type="molecule type" value="Genomic_DNA"/>
</dbReference>
<dbReference type="EMBL" id="U01337">
    <property type="protein sequence ID" value="AAB03517.1"/>
    <property type="molecule type" value="Genomic_DNA"/>
</dbReference>
<dbReference type="EMBL" id="AB158254">
    <property type="protein sequence ID" value="BAE66645.1"/>
    <property type="molecule type" value="mRNA"/>
</dbReference>
<dbReference type="EMBL" id="BT019864">
    <property type="protein sequence ID" value="AAV38667.1"/>
    <property type="molecule type" value="mRNA"/>
</dbReference>
<dbReference type="EMBL" id="AL542736">
    <property type="status" value="NOT_ANNOTATED_CDS"/>
    <property type="molecule type" value="mRNA"/>
</dbReference>
<dbReference type="EMBL" id="Z84466">
    <property type="status" value="NOT_ANNOTATED_CDS"/>
    <property type="molecule type" value="Genomic_DNA"/>
</dbReference>
<dbReference type="EMBL" id="BC002466">
    <property type="protein sequence ID" value="AAH02466.1"/>
    <property type="molecule type" value="mRNA"/>
</dbReference>
<dbReference type="EMBL" id="M13829">
    <property type="protein sequence ID" value="AAB08754.1"/>
    <property type="molecule type" value="mRNA"/>
</dbReference>
<dbReference type="CCDS" id="CCDS35232.1">
    <molecule id="P10398-1"/>
</dbReference>
<dbReference type="CCDS" id="CCDS59164.1">
    <molecule id="P10398-2"/>
</dbReference>
<dbReference type="PIR" id="A53026">
    <property type="entry name" value="TVHUAF"/>
</dbReference>
<dbReference type="RefSeq" id="NP_001243125.1">
    <property type="nucleotide sequence ID" value="NM_001256196.1"/>
</dbReference>
<dbReference type="RefSeq" id="NP_001243126.1">
    <molecule id="P10398-2"/>
    <property type="nucleotide sequence ID" value="NM_001256197.2"/>
</dbReference>
<dbReference type="RefSeq" id="NP_001645.1">
    <molecule id="P10398-1"/>
    <property type="nucleotide sequence ID" value="NM_001654.5"/>
</dbReference>
<dbReference type="RefSeq" id="XP_011542210.1">
    <property type="nucleotide sequence ID" value="XM_011543908.2"/>
</dbReference>
<dbReference type="PDB" id="1WXM">
    <property type="method" value="NMR"/>
    <property type="chains" value="A=19-91"/>
</dbReference>
<dbReference type="PDB" id="2MSE">
    <property type="method" value="NMR"/>
    <property type="chains" value="D=19-91"/>
</dbReference>
<dbReference type="PDB" id="9AXM">
    <property type="method" value="X-ray"/>
    <property type="resolution" value="2.42 A"/>
    <property type="chains" value="B/D=298-576"/>
</dbReference>
<dbReference type="PDBsum" id="1WXM"/>
<dbReference type="PDBsum" id="2MSE"/>
<dbReference type="PDBsum" id="9AXM"/>
<dbReference type="BMRB" id="P10398"/>
<dbReference type="SMR" id="P10398"/>
<dbReference type="BioGRID" id="106864">
    <property type="interactions" value="418"/>
</dbReference>
<dbReference type="CORUM" id="P10398"/>
<dbReference type="DIP" id="DIP-31374N"/>
<dbReference type="FunCoup" id="P10398">
    <property type="interactions" value="1836"/>
</dbReference>
<dbReference type="IntAct" id="P10398">
    <property type="interactions" value="148"/>
</dbReference>
<dbReference type="MINT" id="P10398"/>
<dbReference type="STRING" id="9606.ENSP00000290277"/>
<dbReference type="BindingDB" id="P10398"/>
<dbReference type="ChEMBL" id="CHEMBL1169596"/>
<dbReference type="DrugBank" id="DB00171">
    <property type="generic name" value="ATP"/>
</dbReference>
<dbReference type="DrugBank" id="DB15254">
    <property type="generic name" value="Avutometinib"/>
</dbReference>
<dbReference type="DrugBank" id="DB15266">
    <property type="generic name" value="Tovorafenib"/>
</dbReference>
<dbReference type="DrugCentral" id="P10398"/>
<dbReference type="GuidetoPHARMACOLOGY" id="1933"/>
<dbReference type="GlyGen" id="P10398">
    <property type="glycosylation" value="1 site, 1 O-linked glycan (1 site)"/>
</dbReference>
<dbReference type="iPTMnet" id="P10398"/>
<dbReference type="PhosphoSitePlus" id="P10398"/>
<dbReference type="BioMuta" id="ARAF"/>
<dbReference type="DMDM" id="1730068"/>
<dbReference type="CPTAC" id="CPTAC-1339"/>
<dbReference type="CPTAC" id="CPTAC-1343"/>
<dbReference type="CPTAC" id="CPTAC-1344"/>
<dbReference type="CPTAC" id="CPTAC-1345"/>
<dbReference type="CPTAC" id="CPTAC-1547"/>
<dbReference type="CPTAC" id="CPTAC-3065"/>
<dbReference type="CPTAC" id="CPTAC-5774"/>
<dbReference type="CPTAC" id="CPTAC-5775"/>
<dbReference type="CPTAC" id="CPTAC-5776"/>
<dbReference type="CPTAC" id="CPTAC-5823"/>
<dbReference type="CPTAC" id="CPTAC-5824"/>
<dbReference type="CPTAC" id="CPTAC-5825"/>
<dbReference type="CPTAC" id="CPTAC-5826"/>
<dbReference type="CPTAC" id="non-CPTAC-5346"/>
<dbReference type="CPTAC" id="non-CPTAC-5347"/>
<dbReference type="CPTAC" id="non-CPTAC-5348"/>
<dbReference type="CPTAC" id="non-CPTAC-5350"/>
<dbReference type="CPTAC" id="non-CPTAC-5351"/>
<dbReference type="CPTAC" id="non-CPTAC-5533"/>
<dbReference type="CPTAC" id="non-CPTAC-5730"/>
<dbReference type="CPTAC" id="non-CPTAC-5731"/>
<dbReference type="jPOST" id="P10398"/>
<dbReference type="MassIVE" id="P10398"/>
<dbReference type="PaxDb" id="9606-ENSP00000290277"/>
<dbReference type="PeptideAtlas" id="P10398"/>
<dbReference type="ProteomicsDB" id="52601">
    <molecule id="P10398-1"/>
</dbReference>
<dbReference type="ProteomicsDB" id="62876"/>
<dbReference type="Pumba" id="P10398"/>
<dbReference type="TopDownProteomics" id="P10398-1">
    <molecule id="P10398-1"/>
</dbReference>
<dbReference type="Antibodypedia" id="11388">
    <property type="antibodies" value="707 antibodies from 39 providers"/>
</dbReference>
<dbReference type="CPTC" id="P10398">
    <property type="antibodies" value="5 antibodies"/>
</dbReference>
<dbReference type="DNASU" id="369"/>
<dbReference type="Ensembl" id="ENST00000377039.2">
    <molecule id="P10398-2"/>
    <property type="protein sequence ID" value="ENSP00000366238.1"/>
    <property type="gene ID" value="ENSG00000078061.14"/>
</dbReference>
<dbReference type="Ensembl" id="ENST00000377045.9">
    <molecule id="P10398-1"/>
    <property type="protein sequence ID" value="ENSP00000366244.4"/>
    <property type="gene ID" value="ENSG00000078061.14"/>
</dbReference>
<dbReference type="GeneID" id="369"/>
<dbReference type="KEGG" id="hsa:369"/>
<dbReference type="MANE-Select" id="ENST00000377045.9">
    <property type="protein sequence ID" value="ENSP00000366244.4"/>
    <property type="RefSeq nucleotide sequence ID" value="NM_001654.5"/>
    <property type="RefSeq protein sequence ID" value="NP_001645.1"/>
</dbReference>
<dbReference type="UCSC" id="uc031tjj.2">
    <molecule id="P10398-1"/>
    <property type="organism name" value="human"/>
</dbReference>
<dbReference type="AGR" id="HGNC:646"/>
<dbReference type="CTD" id="369"/>
<dbReference type="DisGeNET" id="369"/>
<dbReference type="GeneCards" id="ARAF"/>
<dbReference type="HGNC" id="HGNC:646">
    <property type="gene designation" value="ARAF"/>
</dbReference>
<dbReference type="HPA" id="ENSG00000078061">
    <property type="expression patterns" value="Low tissue specificity"/>
</dbReference>
<dbReference type="MalaCards" id="ARAF"/>
<dbReference type="MIM" id="311010">
    <property type="type" value="gene"/>
</dbReference>
<dbReference type="neXtProt" id="NX_P10398"/>
<dbReference type="OpenTargets" id="ENSG00000078061"/>
<dbReference type="PharmGKB" id="PA24928"/>
<dbReference type="VEuPathDB" id="HostDB:ENSG00000078061"/>
<dbReference type="eggNOG" id="KOG0193">
    <property type="taxonomic scope" value="Eukaryota"/>
</dbReference>
<dbReference type="GeneTree" id="ENSGT00940000159633"/>
<dbReference type="HOGENOM" id="CLU_023684_1_1_1"/>
<dbReference type="InParanoid" id="P10398"/>
<dbReference type="OrthoDB" id="774951at2759"/>
<dbReference type="PAN-GO" id="P10398">
    <property type="GO annotations" value="4 GO annotations based on evolutionary models"/>
</dbReference>
<dbReference type="PhylomeDB" id="P10398"/>
<dbReference type="TreeFam" id="TF317006"/>
<dbReference type="BRENDA" id="2.7.10.2">
    <property type="organism ID" value="2681"/>
</dbReference>
<dbReference type="PathwayCommons" id="P10398"/>
<dbReference type="Reactome" id="R-HSA-5673000">
    <property type="pathway name" value="RAF activation"/>
</dbReference>
<dbReference type="Reactome" id="R-HSA-5674135">
    <property type="pathway name" value="MAP2K and MAPK activation"/>
</dbReference>
<dbReference type="Reactome" id="R-HSA-5675221">
    <property type="pathway name" value="Negative regulation of MAPK pathway"/>
</dbReference>
<dbReference type="Reactome" id="R-HSA-6802946">
    <property type="pathway name" value="Signaling by moderate kinase activity BRAF mutants"/>
</dbReference>
<dbReference type="Reactome" id="R-HSA-6802948">
    <property type="pathway name" value="Signaling by high-kinase activity BRAF mutants"/>
</dbReference>
<dbReference type="Reactome" id="R-HSA-6802952">
    <property type="pathway name" value="Signaling by BRAF and RAF1 fusions"/>
</dbReference>
<dbReference type="Reactome" id="R-HSA-6802955">
    <property type="pathway name" value="Paradoxical activation of RAF signaling by kinase inactive BRAF"/>
</dbReference>
<dbReference type="Reactome" id="R-HSA-9649948">
    <property type="pathway name" value="Signaling downstream of RAS mutants"/>
</dbReference>
<dbReference type="Reactome" id="R-HSA-9656223">
    <property type="pathway name" value="Signaling by RAF1 mutants"/>
</dbReference>
<dbReference type="Reactome" id="R-HSA-9726840">
    <property type="pathway name" value="SHOC2 M1731 mutant abolishes MRAS complex function"/>
</dbReference>
<dbReference type="Reactome" id="R-HSA-9726842">
    <property type="pathway name" value="Gain-of-function MRAS complexes activate RAF signaling"/>
</dbReference>
<dbReference type="SignaLink" id="P10398"/>
<dbReference type="SIGNOR" id="P10398"/>
<dbReference type="BioGRID-ORCS" id="369">
    <property type="hits" value="13 hits in 824 CRISPR screens"/>
</dbReference>
<dbReference type="ChiTaRS" id="ARAF">
    <property type="organism name" value="human"/>
</dbReference>
<dbReference type="EvolutionaryTrace" id="P10398"/>
<dbReference type="GeneWiki" id="ARAF"/>
<dbReference type="GenomeRNAi" id="369"/>
<dbReference type="Pharos" id="P10398">
    <property type="development level" value="Tchem"/>
</dbReference>
<dbReference type="PRO" id="PR:P10398"/>
<dbReference type="Proteomes" id="UP000005640">
    <property type="component" value="Chromosome X"/>
</dbReference>
<dbReference type="RNAct" id="P10398">
    <property type="molecule type" value="protein"/>
</dbReference>
<dbReference type="Bgee" id="ENSG00000078061">
    <property type="expression patterns" value="Expressed in hindlimb stylopod muscle and 185 other cell types or tissues"/>
</dbReference>
<dbReference type="ExpressionAtlas" id="P10398">
    <property type="expression patterns" value="baseline and differential"/>
</dbReference>
<dbReference type="GO" id="GO:0005737">
    <property type="term" value="C:cytoplasm"/>
    <property type="evidence" value="ECO:0000318"/>
    <property type="project" value="GO_Central"/>
</dbReference>
<dbReference type="GO" id="GO:0005829">
    <property type="term" value="C:cytosol"/>
    <property type="evidence" value="ECO:0000318"/>
    <property type="project" value="GO_Central"/>
</dbReference>
<dbReference type="GO" id="GO:0005739">
    <property type="term" value="C:mitochondrion"/>
    <property type="evidence" value="ECO:0000318"/>
    <property type="project" value="GO_Central"/>
</dbReference>
<dbReference type="GO" id="GO:0005524">
    <property type="term" value="F:ATP binding"/>
    <property type="evidence" value="ECO:0007669"/>
    <property type="project" value="UniProtKB-KW"/>
</dbReference>
<dbReference type="GO" id="GO:0004709">
    <property type="term" value="F:MAP kinase kinase kinase activity"/>
    <property type="evidence" value="ECO:0000318"/>
    <property type="project" value="GO_Central"/>
</dbReference>
<dbReference type="GO" id="GO:0004672">
    <property type="term" value="F:protein kinase activity"/>
    <property type="evidence" value="ECO:0000304"/>
    <property type="project" value="ProtInc"/>
</dbReference>
<dbReference type="GO" id="GO:0106310">
    <property type="term" value="F:protein serine kinase activity"/>
    <property type="evidence" value="ECO:0007669"/>
    <property type="project" value="RHEA"/>
</dbReference>
<dbReference type="GO" id="GO:0004674">
    <property type="term" value="F:protein serine/threonine kinase activity"/>
    <property type="evidence" value="ECO:0000314"/>
    <property type="project" value="UniProtKB"/>
</dbReference>
<dbReference type="GO" id="GO:0008270">
    <property type="term" value="F:zinc ion binding"/>
    <property type="evidence" value="ECO:0007669"/>
    <property type="project" value="UniProtKB-KW"/>
</dbReference>
<dbReference type="GO" id="GO:0000165">
    <property type="term" value="P:MAPK cascade"/>
    <property type="evidence" value="ECO:0000318"/>
    <property type="project" value="GO_Central"/>
</dbReference>
<dbReference type="GO" id="GO:0043066">
    <property type="term" value="P:negative regulation of apoptotic process"/>
    <property type="evidence" value="ECO:0000314"/>
    <property type="project" value="UniProtKB"/>
</dbReference>
<dbReference type="GO" id="GO:0033138">
    <property type="term" value="P:positive regulation of peptidyl-serine phosphorylation"/>
    <property type="evidence" value="ECO:0000314"/>
    <property type="project" value="UniProtKB"/>
</dbReference>
<dbReference type="GO" id="GO:0036211">
    <property type="term" value="P:protein modification process"/>
    <property type="evidence" value="ECO:0000304"/>
    <property type="project" value="ProtInc"/>
</dbReference>
<dbReference type="GO" id="GO:0032434">
    <property type="term" value="P:regulation of proteasomal ubiquitin-dependent protein catabolic process"/>
    <property type="evidence" value="ECO:0000315"/>
    <property type="project" value="UniProtKB"/>
</dbReference>
<dbReference type="GO" id="GO:0032006">
    <property type="term" value="P:regulation of TOR signaling"/>
    <property type="evidence" value="ECO:0000315"/>
    <property type="project" value="UniProtKB"/>
</dbReference>
<dbReference type="CDD" id="cd20870">
    <property type="entry name" value="C1_A_C-Raf"/>
    <property type="match status" value="1"/>
</dbReference>
<dbReference type="CDD" id="cd17133">
    <property type="entry name" value="RBD_ARAF"/>
    <property type="match status" value="1"/>
</dbReference>
<dbReference type="CDD" id="cd14150">
    <property type="entry name" value="STKc_A-Raf"/>
    <property type="match status" value="1"/>
</dbReference>
<dbReference type="FunFam" id="3.10.20.90:FF:000015">
    <property type="entry name" value="B-Raf proto-oncogene serine/threonine-protein kinase"/>
    <property type="match status" value="1"/>
</dbReference>
<dbReference type="FunFam" id="3.30.200.20:FF:000024">
    <property type="entry name" value="B-Raf proto-oncogene serine/threonine-protein kinase"/>
    <property type="match status" value="1"/>
</dbReference>
<dbReference type="FunFam" id="3.30.60.20:FF:000004">
    <property type="entry name" value="B-Raf proto-oncogene serine/threonine-protein kinase"/>
    <property type="match status" value="1"/>
</dbReference>
<dbReference type="FunFam" id="1.10.510.10:FF:000036">
    <property type="entry name" value="RAF proto-oncogene serine/threonine-protein kinase"/>
    <property type="match status" value="1"/>
</dbReference>
<dbReference type="Gene3D" id="3.30.60.20">
    <property type="match status" value="1"/>
</dbReference>
<dbReference type="Gene3D" id="3.10.20.90">
    <property type="entry name" value="Phosphatidylinositol 3-kinase Catalytic Subunit, Chain A, domain 1"/>
    <property type="match status" value="1"/>
</dbReference>
<dbReference type="Gene3D" id="3.30.200.20">
    <property type="entry name" value="Phosphorylase Kinase, domain 1"/>
    <property type="match status" value="1"/>
</dbReference>
<dbReference type="Gene3D" id="1.10.510.10">
    <property type="entry name" value="Transferase(Phosphotransferase) domain 1"/>
    <property type="match status" value="1"/>
</dbReference>
<dbReference type="InterPro" id="IPR046349">
    <property type="entry name" value="C1-like_sf"/>
</dbReference>
<dbReference type="InterPro" id="IPR020454">
    <property type="entry name" value="DAG/PE-bd"/>
</dbReference>
<dbReference type="InterPro" id="IPR011009">
    <property type="entry name" value="Kinase-like_dom_sf"/>
</dbReference>
<dbReference type="InterPro" id="IPR002219">
    <property type="entry name" value="PE/DAG-bd"/>
</dbReference>
<dbReference type="InterPro" id="IPR000719">
    <property type="entry name" value="Prot_kinase_dom"/>
</dbReference>
<dbReference type="InterPro" id="IPR017441">
    <property type="entry name" value="Protein_kinase_ATP_BS"/>
</dbReference>
<dbReference type="InterPro" id="IPR003116">
    <property type="entry name" value="RBD_dom"/>
</dbReference>
<dbReference type="InterPro" id="IPR001245">
    <property type="entry name" value="Ser-Thr/Tyr_kinase_cat_dom"/>
</dbReference>
<dbReference type="InterPro" id="IPR008271">
    <property type="entry name" value="Ser/Thr_kinase_AS"/>
</dbReference>
<dbReference type="InterPro" id="IPR051681">
    <property type="entry name" value="Ser/Thr_Kinases-Pseudokinases"/>
</dbReference>
<dbReference type="InterPro" id="IPR029071">
    <property type="entry name" value="Ubiquitin-like_domsf"/>
</dbReference>
<dbReference type="PANTHER" id="PTHR44329">
    <property type="entry name" value="SERINE/THREONINE-PROTEIN KINASE TNNI3K-RELATED"/>
    <property type="match status" value="1"/>
</dbReference>
<dbReference type="PANTHER" id="PTHR44329:SF55">
    <property type="entry name" value="SERINE_THREONINE-PROTEIN KINASE A-RAF"/>
    <property type="match status" value="1"/>
</dbReference>
<dbReference type="Pfam" id="PF00130">
    <property type="entry name" value="C1_1"/>
    <property type="match status" value="1"/>
</dbReference>
<dbReference type="Pfam" id="PF07714">
    <property type="entry name" value="PK_Tyr_Ser-Thr"/>
    <property type="match status" value="1"/>
</dbReference>
<dbReference type="Pfam" id="PF02196">
    <property type="entry name" value="RBD"/>
    <property type="match status" value="1"/>
</dbReference>
<dbReference type="PRINTS" id="PR00008">
    <property type="entry name" value="DAGPEDOMAIN"/>
</dbReference>
<dbReference type="SMART" id="SM00109">
    <property type="entry name" value="C1"/>
    <property type="match status" value="1"/>
</dbReference>
<dbReference type="SMART" id="SM00455">
    <property type="entry name" value="RBD"/>
    <property type="match status" value="1"/>
</dbReference>
<dbReference type="SMART" id="SM00220">
    <property type="entry name" value="S_TKc"/>
    <property type="match status" value="1"/>
</dbReference>
<dbReference type="SUPFAM" id="SSF57889">
    <property type="entry name" value="Cysteine-rich domain"/>
    <property type="match status" value="1"/>
</dbReference>
<dbReference type="SUPFAM" id="SSF56112">
    <property type="entry name" value="Protein kinase-like (PK-like)"/>
    <property type="match status" value="1"/>
</dbReference>
<dbReference type="SUPFAM" id="SSF54236">
    <property type="entry name" value="Ubiquitin-like"/>
    <property type="match status" value="1"/>
</dbReference>
<dbReference type="PROSITE" id="PS00107">
    <property type="entry name" value="PROTEIN_KINASE_ATP"/>
    <property type="match status" value="1"/>
</dbReference>
<dbReference type="PROSITE" id="PS50011">
    <property type="entry name" value="PROTEIN_KINASE_DOM"/>
    <property type="match status" value="1"/>
</dbReference>
<dbReference type="PROSITE" id="PS00108">
    <property type="entry name" value="PROTEIN_KINASE_ST"/>
    <property type="match status" value="1"/>
</dbReference>
<dbReference type="PROSITE" id="PS50898">
    <property type="entry name" value="RBD"/>
    <property type="match status" value="1"/>
</dbReference>
<dbReference type="PROSITE" id="PS00479">
    <property type="entry name" value="ZF_DAG_PE_1"/>
    <property type="match status" value="1"/>
</dbReference>
<dbReference type="PROSITE" id="PS50081">
    <property type="entry name" value="ZF_DAG_PE_2"/>
    <property type="match status" value="1"/>
</dbReference>
<accession>P10398</accession>
<accession>P07557</accession>
<accession>Q5H9B2</accession>
<accession>Q5H9B3</accession>
<feature type="chain" id="PRO_0000085622" description="Serine/threonine-protein kinase A-Raf">
    <location>
        <begin position="1"/>
        <end position="606"/>
    </location>
</feature>
<feature type="domain" description="RBD" evidence="4">
    <location>
        <begin position="19"/>
        <end position="91"/>
    </location>
</feature>
<feature type="domain" description="Protein kinase" evidence="2">
    <location>
        <begin position="310"/>
        <end position="570"/>
    </location>
</feature>
<feature type="zinc finger region" description="Phorbol-ester/DAG-type" evidence="3">
    <location>
        <begin position="98"/>
        <end position="144"/>
    </location>
</feature>
<feature type="region of interest" description="Disordered" evidence="6">
    <location>
        <begin position="160"/>
        <end position="207"/>
    </location>
</feature>
<feature type="region of interest" description="Disordered" evidence="6">
    <location>
        <begin position="240"/>
        <end position="290"/>
    </location>
</feature>
<feature type="compositionally biased region" description="Basic and acidic residues" evidence="6">
    <location>
        <begin position="274"/>
        <end position="289"/>
    </location>
</feature>
<feature type="active site" description="Proton acceptor" evidence="2 5">
    <location>
        <position position="429"/>
    </location>
</feature>
<feature type="binding site" evidence="1">
    <location>
        <position position="99"/>
    </location>
    <ligand>
        <name>Zn(2+)</name>
        <dbReference type="ChEBI" id="CHEBI:29105"/>
        <label>1</label>
    </ligand>
</feature>
<feature type="binding site" evidence="1">
    <location>
        <position position="112"/>
    </location>
    <ligand>
        <name>Zn(2+)</name>
        <dbReference type="ChEBI" id="CHEBI:29105"/>
        <label>2</label>
    </ligand>
</feature>
<feature type="binding site" evidence="1">
    <location>
        <position position="115"/>
    </location>
    <ligand>
        <name>Zn(2+)</name>
        <dbReference type="ChEBI" id="CHEBI:29105"/>
        <label>2</label>
    </ligand>
</feature>
<feature type="binding site" evidence="1">
    <location>
        <position position="125"/>
    </location>
    <ligand>
        <name>Zn(2+)</name>
        <dbReference type="ChEBI" id="CHEBI:29105"/>
        <label>1</label>
    </ligand>
</feature>
<feature type="binding site" evidence="1">
    <location>
        <position position="128"/>
    </location>
    <ligand>
        <name>Zn(2+)</name>
        <dbReference type="ChEBI" id="CHEBI:29105"/>
        <label>1</label>
    </ligand>
</feature>
<feature type="binding site" evidence="1">
    <location>
        <position position="133"/>
    </location>
    <ligand>
        <name>Zn(2+)</name>
        <dbReference type="ChEBI" id="CHEBI:29105"/>
        <label>2</label>
    </ligand>
</feature>
<feature type="binding site" evidence="1">
    <location>
        <position position="136"/>
    </location>
    <ligand>
        <name>Zn(2+)</name>
        <dbReference type="ChEBI" id="CHEBI:29105"/>
        <label>2</label>
    </ligand>
</feature>
<feature type="binding site" evidence="1">
    <location>
        <position position="144"/>
    </location>
    <ligand>
        <name>Zn(2+)</name>
        <dbReference type="ChEBI" id="CHEBI:29105"/>
        <label>1</label>
    </ligand>
</feature>
<feature type="binding site" evidence="2">
    <location>
        <begin position="316"/>
        <end position="324"/>
    </location>
    <ligand>
        <name>ATP</name>
        <dbReference type="ChEBI" id="CHEBI:30616"/>
    </ligand>
</feature>
<feature type="binding site" evidence="2">
    <location>
        <position position="336"/>
    </location>
    <ligand>
        <name>ATP</name>
        <dbReference type="ChEBI" id="CHEBI:30616"/>
    </ligand>
</feature>
<feature type="modified residue" description="Phosphoserine" evidence="19">
    <location>
        <position position="157"/>
    </location>
</feature>
<feature type="modified residue" description="Phosphoserine" evidence="19">
    <location>
        <position position="162"/>
    </location>
</feature>
<feature type="modified residue" description="Phosphothreonine" evidence="20">
    <location>
        <position position="181"/>
    </location>
</feature>
<feature type="modified residue" description="Phosphoserine" evidence="17 20">
    <location>
        <position position="186"/>
    </location>
</feature>
<feature type="modified residue" description="Phosphoserine" evidence="15">
    <location>
        <position position="214"/>
    </location>
</feature>
<feature type="modified residue" description="Phosphothreonine" evidence="19">
    <location>
        <position position="253"/>
    </location>
</feature>
<feature type="modified residue" description="Phosphoserine" evidence="16 19 20">
    <location>
        <position position="257"/>
    </location>
</feature>
<feature type="modified residue" description="Phosphoserine" evidence="19">
    <location>
        <position position="269"/>
    </location>
</feature>
<feature type="modified residue" description="Phosphothreonine" evidence="18">
    <location>
        <position position="318"/>
    </location>
</feature>
<feature type="splice variant" id="VSP_045609" description="In isoform 2." evidence="12 13">
    <original>S</original>
    <variation>R</variation>
    <location>
        <position position="186"/>
    </location>
</feature>
<feature type="splice variant" id="VSP_045610" description="In isoform 2." evidence="12 13">
    <location>
        <begin position="187"/>
        <end position="606"/>
    </location>
</feature>
<feature type="sequence variant" id="VAR_040375" description="In dbSNP:rs56197559." evidence="8">
    <original>M</original>
    <variation>T</variation>
    <location>
        <position position="98"/>
    </location>
</feature>
<feature type="sequence variant" id="VAR_040376" description="In a colorectal adenocarcinoma sample; somatic mutation." evidence="8">
    <original>G</original>
    <variation>C</variation>
    <location>
        <position position="331"/>
    </location>
</feature>
<feature type="sequence variant" id="VAR_040377" description="In dbSNP:rs55852926." evidence="8">
    <original>E</original>
    <variation>D</variation>
    <location>
        <position position="578"/>
    </location>
</feature>
<feature type="sequence conflict" description="In Ref. 8; AAB08754." evidence="14" ref="8">
    <original>L</original>
    <variation>P</variation>
    <location>
        <position position="368"/>
    </location>
</feature>
<feature type="sequence conflict" description="In Ref. 8; AAB08754." evidence="14" ref="8">
    <original>F</original>
    <variation>V</variation>
    <location>
        <position position="378"/>
    </location>
</feature>
<feature type="sequence conflict" description="In Ref. 8; AAB08754." evidence="14" ref="8">
    <original>S</original>
    <variation>P</variation>
    <location>
        <position position="469"/>
    </location>
</feature>
<feature type="sequence conflict" description="In Ref. 8; AAB08754." evidence="14" ref="8">
    <original>I</original>
    <variation>T</variation>
    <location>
        <position position="478"/>
    </location>
</feature>
<feature type="strand" evidence="21">
    <location>
        <begin position="19"/>
        <end position="24"/>
    </location>
</feature>
<feature type="strand" evidence="21">
    <location>
        <begin position="26"/>
        <end position="28"/>
    </location>
</feature>
<feature type="strand" evidence="21">
    <location>
        <begin position="30"/>
        <end position="34"/>
    </location>
</feature>
<feature type="helix" evidence="21">
    <location>
        <begin position="42"/>
        <end position="50"/>
    </location>
</feature>
<feature type="turn" evidence="22">
    <location>
        <begin position="51"/>
        <end position="53"/>
    </location>
</feature>
<feature type="strand" evidence="21">
    <location>
        <begin position="56"/>
        <end position="67"/>
    </location>
</feature>
<feature type="strand" evidence="21">
    <location>
        <begin position="69"/>
        <end position="72"/>
    </location>
</feature>
<feature type="strand" evidence="21">
    <location>
        <begin position="74"/>
        <end position="78"/>
    </location>
</feature>
<feature type="helix" evidence="22">
    <location>
        <begin position="79"/>
        <end position="81"/>
    </location>
</feature>
<feature type="strand" evidence="22">
    <location>
        <begin position="82"/>
        <end position="84"/>
    </location>
</feature>
<feature type="strand" evidence="21">
    <location>
        <begin position="85"/>
        <end position="90"/>
    </location>
</feature>
<organism>
    <name type="scientific">Homo sapiens</name>
    <name type="common">Human</name>
    <dbReference type="NCBI Taxonomy" id="9606"/>
    <lineage>
        <taxon>Eukaryota</taxon>
        <taxon>Metazoa</taxon>
        <taxon>Chordata</taxon>
        <taxon>Craniata</taxon>
        <taxon>Vertebrata</taxon>
        <taxon>Euteleostomi</taxon>
        <taxon>Mammalia</taxon>
        <taxon>Eutheria</taxon>
        <taxon>Euarchontoglires</taxon>
        <taxon>Primates</taxon>
        <taxon>Haplorrhini</taxon>
        <taxon>Catarrhini</taxon>
        <taxon>Hominidae</taxon>
        <taxon>Homo</taxon>
    </lineage>
</organism>
<keyword id="KW-0002">3D-structure</keyword>
<keyword id="KW-0025">Alternative splicing</keyword>
<keyword id="KW-0067">ATP-binding</keyword>
<keyword id="KW-0418">Kinase</keyword>
<keyword id="KW-0479">Metal-binding</keyword>
<keyword id="KW-0547">Nucleotide-binding</keyword>
<keyword id="KW-0597">Phosphoprotein</keyword>
<keyword id="KW-1267">Proteomics identification</keyword>
<keyword id="KW-0656">Proto-oncogene</keyword>
<keyword id="KW-1185">Reference proteome</keyword>
<keyword id="KW-0723">Serine/threonine-protein kinase</keyword>
<keyword id="KW-0808">Transferase</keyword>
<keyword id="KW-0862">Zinc</keyword>
<keyword id="KW-0863">Zinc-finger</keyword>
<sequence>MEPPRGPPANGAEPSRAVGTVKVYLPNKQRTVVTVRDGMSVYDSLDKALKVRGLNQDCCVVYRLIKGRKTVTAWDTAIAPLDGEELIVEVLEDVPLTMHNFVRKTFFSLAFCDFCLKFLFHGFRCQTCGYKFHQHCSSKVPTVCVDMSTNRQQFYHSVQDLSGGSRQHEAPSNRPLNELLTPQGPSPRTQHCDPEHFPFPAPANAPLQRIRSTSTPNVHMVSTTAPMDSNLIQLTGQSFSTDAAGSRGGSDGTPRGSPSPASVSSGRKSPHSKSPAEQRERKSLADDKKKVKNLGYRDSGYYWEVPPSEVQLLKRIGTGSFGTVFRGRWHGDVAVKVLKVSQPTAEQAQAFKNEMQVLRKTRHVNILLFMGFMTRPGFAIITQWCEGSSLYHHLHVADTRFDMVQLIDVARQTAQGMDYLHAKNIIHRDLKSNNIFLHEGLTVKIGDFGLATVKTRWSGAQPLEQPSGSVLWMAAEVIRMQDPNPYSFQSDVYAYGVVLYELMTGSLPYSHIGCRDQIIFMVGRGYLSPDLSKISSNCPKAMRRLLSDCLKFQREERPLFPQILATIELLQRSLPKIERSASEPSLHRTQADELPACLLSAARLVP</sequence>
<evidence type="ECO:0000250" key="1"/>
<evidence type="ECO:0000255" key="2">
    <source>
        <dbReference type="PROSITE-ProRule" id="PRU00159"/>
    </source>
</evidence>
<evidence type="ECO:0000255" key="3">
    <source>
        <dbReference type="PROSITE-ProRule" id="PRU00226"/>
    </source>
</evidence>
<evidence type="ECO:0000255" key="4">
    <source>
        <dbReference type="PROSITE-ProRule" id="PRU00262"/>
    </source>
</evidence>
<evidence type="ECO:0000255" key="5">
    <source>
        <dbReference type="PROSITE-ProRule" id="PRU10027"/>
    </source>
</evidence>
<evidence type="ECO:0000256" key="6">
    <source>
        <dbReference type="SAM" id="MobiDB-lite"/>
    </source>
</evidence>
<evidence type="ECO:0000269" key="7">
    <source>
    </source>
</evidence>
<evidence type="ECO:0000269" key="8">
    <source>
    </source>
</evidence>
<evidence type="ECO:0000269" key="9">
    <source>
    </source>
</evidence>
<evidence type="ECO:0000269" key="10">
    <source>
    </source>
</evidence>
<evidence type="ECO:0000269" key="11">
    <source>
    </source>
</evidence>
<evidence type="ECO:0000303" key="12">
    <source>
    </source>
</evidence>
<evidence type="ECO:0000303" key="13">
    <source ref="5"/>
</evidence>
<evidence type="ECO:0000305" key="14"/>
<evidence type="ECO:0000305" key="15">
    <source>
    </source>
</evidence>
<evidence type="ECO:0007744" key="16">
    <source>
    </source>
</evidence>
<evidence type="ECO:0007744" key="17">
    <source>
    </source>
</evidence>
<evidence type="ECO:0007744" key="18">
    <source>
    </source>
</evidence>
<evidence type="ECO:0007744" key="19">
    <source>
    </source>
</evidence>
<evidence type="ECO:0007744" key="20">
    <source>
    </source>
</evidence>
<evidence type="ECO:0007829" key="21">
    <source>
        <dbReference type="PDB" id="1WXM"/>
    </source>
</evidence>
<evidence type="ECO:0007829" key="22">
    <source>
        <dbReference type="PDB" id="2MSE"/>
    </source>
</evidence>
<name>ARAF_HUMAN</name>
<protein>
    <recommendedName>
        <fullName>Serine/threonine-protein kinase A-Raf</fullName>
        <ecNumber>2.7.11.1</ecNumber>
    </recommendedName>
    <alternativeName>
        <fullName>Proto-oncogene A-Raf</fullName>
    </alternativeName>
    <alternativeName>
        <fullName>Proto-oncogene A-Raf-1</fullName>
    </alternativeName>
    <alternativeName>
        <fullName>Proto-oncogene Pks</fullName>
    </alternativeName>
</protein>